<reference key="1">
    <citation type="journal article" date="1998" name="DNA Res.">
        <title>Complete sequence and gene organization of the genome of a hyper-thermophilic archaebacterium, Pyrococcus horikoshii OT3.</title>
        <authorList>
            <person name="Kawarabayasi Y."/>
            <person name="Sawada M."/>
            <person name="Horikawa H."/>
            <person name="Haikawa Y."/>
            <person name="Hino Y."/>
            <person name="Yamamoto S."/>
            <person name="Sekine M."/>
            <person name="Baba S."/>
            <person name="Kosugi H."/>
            <person name="Hosoyama A."/>
            <person name="Nagai Y."/>
            <person name="Sakai M."/>
            <person name="Ogura K."/>
            <person name="Otsuka R."/>
            <person name="Nakazawa H."/>
            <person name="Takamiya M."/>
            <person name="Ohfuku Y."/>
            <person name="Funahashi T."/>
            <person name="Tanaka T."/>
            <person name="Kudoh Y."/>
            <person name="Yamazaki J."/>
            <person name="Kushida N."/>
            <person name="Oguchi A."/>
            <person name="Aoki K."/>
            <person name="Yoshizawa T."/>
            <person name="Nakamura Y."/>
            <person name="Robb F.T."/>
            <person name="Horikoshi K."/>
            <person name="Masuchi Y."/>
            <person name="Shizuya H."/>
            <person name="Kikuchi H."/>
        </authorList>
    </citation>
    <scope>NUCLEOTIDE SEQUENCE [LARGE SCALE GENOMIC DNA]</scope>
    <source>
        <strain>ATCC 700860 / DSM 12428 / JCM 9974 / NBRC 100139 / OT-3</strain>
    </source>
</reference>
<dbReference type="EMBL" id="BA000001">
    <property type="protein sequence ID" value="BAA30418.1"/>
    <property type="molecule type" value="Genomic_DNA"/>
</dbReference>
<dbReference type="PIR" id="B71002">
    <property type="entry name" value="B71002"/>
</dbReference>
<dbReference type="STRING" id="70601.gene:9378285"/>
<dbReference type="EnsemblBacteria" id="BAA30418">
    <property type="protein sequence ID" value="BAA30418"/>
    <property type="gene ID" value="BAA30418"/>
</dbReference>
<dbReference type="KEGG" id="pho:PH1312"/>
<dbReference type="eggNOG" id="arCOG02119">
    <property type="taxonomic scope" value="Archaea"/>
</dbReference>
<dbReference type="Proteomes" id="UP000000752">
    <property type="component" value="Chromosome"/>
</dbReference>
<dbReference type="HAMAP" id="MF_01223">
    <property type="entry name" value="UPF0212"/>
    <property type="match status" value="1"/>
</dbReference>
<dbReference type="InterPro" id="IPR007564">
    <property type="entry name" value="UPF0212"/>
</dbReference>
<dbReference type="NCBIfam" id="NF003035">
    <property type="entry name" value="PRK03922.1"/>
    <property type="match status" value="1"/>
</dbReference>
<dbReference type="PANTHER" id="PTHR42199">
    <property type="entry name" value="UPF0212 PROTEIN MJ0068"/>
    <property type="match status" value="1"/>
</dbReference>
<dbReference type="PANTHER" id="PTHR42199:SF1">
    <property type="entry name" value="UPF0212 PROTEIN TK1194"/>
    <property type="match status" value="1"/>
</dbReference>
<dbReference type="Pfam" id="PF04475">
    <property type="entry name" value="DUF555"/>
    <property type="match status" value="1"/>
</dbReference>
<dbReference type="PIRSF" id="PIRSF016934">
    <property type="entry name" value="UCP016934"/>
    <property type="match status" value="1"/>
</dbReference>
<sequence>MGDYIVVLEAPIIVKDVESVEEAIEAAVNKVVNALEKEKLDFVRVELGYSKCPVCGAHFESAFVVGNVGLVGIYLTLKVFNAQSLEHAERIAKAVVGRALKKSH</sequence>
<protein>
    <recommendedName>
        <fullName evidence="1">UPF0212 protein PH1312</fullName>
    </recommendedName>
</protein>
<accession>O59054</accession>
<organism>
    <name type="scientific">Pyrococcus horikoshii (strain ATCC 700860 / DSM 12428 / JCM 9974 / NBRC 100139 / OT-3)</name>
    <dbReference type="NCBI Taxonomy" id="70601"/>
    <lineage>
        <taxon>Archaea</taxon>
        <taxon>Methanobacteriati</taxon>
        <taxon>Methanobacteriota</taxon>
        <taxon>Thermococci</taxon>
        <taxon>Thermococcales</taxon>
        <taxon>Thermococcaceae</taxon>
        <taxon>Pyrococcus</taxon>
    </lineage>
</organism>
<evidence type="ECO:0000255" key="1">
    <source>
        <dbReference type="HAMAP-Rule" id="MF_01223"/>
    </source>
</evidence>
<gene>
    <name type="ordered locus">PH1312</name>
</gene>
<name>Y1312_PYRHO</name>
<proteinExistence type="inferred from homology"/>
<feature type="chain" id="PRO_0000068282" description="UPF0212 protein PH1312">
    <location>
        <begin position="1"/>
        <end position="104"/>
    </location>
</feature>
<comment type="similarity">
    <text evidence="1">Belongs to the UPF0212 family.</text>
</comment>